<gene>
    <name type="primary">DBP4</name>
    <name type="ORF">UMAG_11989</name>
</gene>
<protein>
    <recommendedName>
        <fullName>ATP-dependent RNA helicase DBP4</fullName>
        <ecNumber>3.6.4.13</ecNumber>
    </recommendedName>
</protein>
<evidence type="ECO:0000250" key="1"/>
<evidence type="ECO:0000255" key="2">
    <source>
        <dbReference type="PROSITE-ProRule" id="PRU00541"/>
    </source>
</evidence>
<evidence type="ECO:0000255" key="3">
    <source>
        <dbReference type="PROSITE-ProRule" id="PRU00542"/>
    </source>
</evidence>
<evidence type="ECO:0000255" key="4">
    <source>
        <dbReference type="PROSITE-ProRule" id="PRU00552"/>
    </source>
</evidence>
<evidence type="ECO:0000256" key="5">
    <source>
        <dbReference type="SAM" id="MobiDB-lite"/>
    </source>
</evidence>
<evidence type="ECO:0000305" key="6"/>
<organism>
    <name type="scientific">Mycosarcoma maydis</name>
    <name type="common">Corn smut fungus</name>
    <name type="synonym">Ustilago maydis</name>
    <dbReference type="NCBI Taxonomy" id="5270"/>
    <lineage>
        <taxon>Eukaryota</taxon>
        <taxon>Fungi</taxon>
        <taxon>Dikarya</taxon>
        <taxon>Basidiomycota</taxon>
        <taxon>Ustilaginomycotina</taxon>
        <taxon>Ustilaginomycetes</taxon>
        <taxon>Ustilaginales</taxon>
        <taxon>Ustilaginaceae</taxon>
        <taxon>Mycosarcoma</taxon>
    </lineage>
</organism>
<accession>Q4P5U4</accession>
<accession>A0A0D1DY19</accession>
<sequence>MPPSSAAEGSTKRKKGGAAPHLKSRSKNARKLKRSAEDAEIAQLEQGIQAFVSPIDLKQFTQLPLSDRTCRGLKRAGYTDMTDIQAKSLSLSLKGKDVLGAARTGSGKTLAFLIPVLEILYRRKWGPSDGLGALVISPTRELAIQIFEVLRKIGSYHTFSAGLVIGGKDVKQEKDRLSRINILIATPGRLLQHMDQTLGFDTSNVQVLVLDEADRILDMGFSRTLNAIVENLPRNRQTMLFSATQTKRVKDLARLSLQDPEYVAVREPENEGCTPRGLEQHYMLVELEKKLDLLFSFIRTHTKCKALVFMSSCRQVQFVHETFCKLRPGVSLMALHGKQKQAKRLQIFTQFTKTQHALLFATDIAARGLDFPAVDWVIQLDVPEDVDTYIHRVGRTARYTAKGNSLLFVLPSEEKGILEALATKNIAIGRIKPKESKTQSIQNQLQAFAFQEPQIKHLAQKAFVSYVRSIHLQKNKEIFDVTALALEPFAAALGLPGAPKVKFVKEAAKAKKAAAYKAAQQQADDNSGQVKGDSDDEQAERADKNGKVRTKYDRMFERKNQDILSKHYANLIADDASSEQDSSNDSDTSDDDSVSVATTDNDDAEDREETRYGRSAGRRKENRLVGSDTSDSEEDESDDEQNDSGLHKIKSETKRSVMAARGDGDDGFLTLKRADHALEDDGDAYGIGGDDTRITMEQAKADATENLSKRKLAMGQSKKALALAGKRGIGEKLIFDEHGEAHALYELQDEEAFNKQGDAKTQAQRWAEEERERMQQADAKDKELAKEKRREKRRRQKEREKALERGDAPDNGDEGGSGDDDEEEEETGGRAVLAPIDNRSDGYETPDFDLTTEEDEDDDDDADDDDDDDDEAYRAPAPKRRKMAPSAGVTSQPSHSKKSKLEQEEELALRLLAGDA</sequence>
<reference key="1">
    <citation type="journal article" date="2006" name="Nature">
        <title>Insights from the genome of the biotrophic fungal plant pathogen Ustilago maydis.</title>
        <authorList>
            <person name="Kaemper J."/>
            <person name="Kahmann R."/>
            <person name="Boelker M."/>
            <person name="Ma L.-J."/>
            <person name="Brefort T."/>
            <person name="Saville B.J."/>
            <person name="Banuett F."/>
            <person name="Kronstad J.W."/>
            <person name="Gold S.E."/>
            <person name="Mueller O."/>
            <person name="Perlin M.H."/>
            <person name="Woesten H.A.B."/>
            <person name="de Vries R."/>
            <person name="Ruiz-Herrera J."/>
            <person name="Reynaga-Pena C.G."/>
            <person name="Snetselaar K."/>
            <person name="McCann M."/>
            <person name="Perez-Martin J."/>
            <person name="Feldbruegge M."/>
            <person name="Basse C.W."/>
            <person name="Steinberg G."/>
            <person name="Ibeas J.I."/>
            <person name="Holloman W."/>
            <person name="Guzman P."/>
            <person name="Farman M.L."/>
            <person name="Stajich J.E."/>
            <person name="Sentandreu R."/>
            <person name="Gonzalez-Prieto J.M."/>
            <person name="Kennell J.C."/>
            <person name="Molina L."/>
            <person name="Schirawski J."/>
            <person name="Mendoza-Mendoza A."/>
            <person name="Greilinger D."/>
            <person name="Muench K."/>
            <person name="Roessel N."/>
            <person name="Scherer M."/>
            <person name="Vranes M."/>
            <person name="Ladendorf O."/>
            <person name="Vincon V."/>
            <person name="Fuchs U."/>
            <person name="Sandrock B."/>
            <person name="Meng S."/>
            <person name="Ho E.C.H."/>
            <person name="Cahill M.J."/>
            <person name="Boyce K.J."/>
            <person name="Klose J."/>
            <person name="Klosterman S.J."/>
            <person name="Deelstra H.J."/>
            <person name="Ortiz-Castellanos L."/>
            <person name="Li W."/>
            <person name="Sanchez-Alonso P."/>
            <person name="Schreier P.H."/>
            <person name="Haeuser-Hahn I."/>
            <person name="Vaupel M."/>
            <person name="Koopmann E."/>
            <person name="Friedrich G."/>
            <person name="Voss H."/>
            <person name="Schlueter T."/>
            <person name="Margolis J."/>
            <person name="Platt D."/>
            <person name="Swimmer C."/>
            <person name="Gnirke A."/>
            <person name="Chen F."/>
            <person name="Vysotskaia V."/>
            <person name="Mannhaupt G."/>
            <person name="Gueldener U."/>
            <person name="Muensterkoetter M."/>
            <person name="Haase D."/>
            <person name="Oesterheld M."/>
            <person name="Mewes H.-W."/>
            <person name="Mauceli E.W."/>
            <person name="DeCaprio D."/>
            <person name="Wade C.M."/>
            <person name="Butler J."/>
            <person name="Young S.K."/>
            <person name="Jaffe D.B."/>
            <person name="Calvo S.E."/>
            <person name="Nusbaum C."/>
            <person name="Galagan J.E."/>
            <person name="Birren B.W."/>
        </authorList>
    </citation>
    <scope>NUCLEOTIDE SEQUENCE [LARGE SCALE GENOMIC DNA]</scope>
    <source>
        <strain>DSM 14603 / FGSC 9021 / UM521</strain>
    </source>
</reference>
<reference key="2">
    <citation type="submission" date="2014-09" db="EMBL/GenBank/DDBJ databases">
        <authorList>
            <person name="Gueldener U."/>
            <person name="Muensterkoetter M."/>
            <person name="Walter M.C."/>
            <person name="Mannhaupt G."/>
            <person name="Kahmann R."/>
        </authorList>
    </citation>
    <scope>GENOME REANNOTATION</scope>
    <source>
        <strain>DSM 14603 / FGSC 9021 / UM521</strain>
    </source>
</reference>
<feature type="chain" id="PRO_0000256004" description="ATP-dependent RNA helicase DBP4">
    <location>
        <begin position="1"/>
        <end position="916"/>
    </location>
</feature>
<feature type="domain" description="Helicase ATP-binding" evidence="2">
    <location>
        <begin position="89"/>
        <end position="263"/>
    </location>
</feature>
<feature type="domain" description="Helicase C-terminal" evidence="3">
    <location>
        <begin position="277"/>
        <end position="442"/>
    </location>
</feature>
<feature type="region of interest" description="Disordered" evidence="5">
    <location>
        <begin position="1"/>
        <end position="34"/>
    </location>
</feature>
<feature type="region of interest" description="Disordered" evidence="5">
    <location>
        <begin position="519"/>
        <end position="554"/>
    </location>
</feature>
<feature type="region of interest" description="Disordered" evidence="5">
    <location>
        <begin position="575"/>
        <end position="667"/>
    </location>
</feature>
<feature type="region of interest" description="Disordered" evidence="5">
    <location>
        <begin position="752"/>
        <end position="916"/>
    </location>
</feature>
<feature type="short sequence motif" description="Q motif" evidence="4">
    <location>
        <begin position="58"/>
        <end position="86"/>
    </location>
</feature>
<feature type="short sequence motif" description="DEAD box" evidence="2">
    <location>
        <begin position="211"/>
        <end position="214"/>
    </location>
</feature>
<feature type="compositionally biased region" description="Basic residues" evidence="5">
    <location>
        <begin position="12"/>
        <end position="33"/>
    </location>
</feature>
<feature type="compositionally biased region" description="Basic and acidic residues" evidence="5">
    <location>
        <begin position="539"/>
        <end position="554"/>
    </location>
</feature>
<feature type="compositionally biased region" description="Acidic residues" evidence="5">
    <location>
        <begin position="576"/>
        <end position="593"/>
    </location>
</feature>
<feature type="compositionally biased region" description="Basic and acidic residues" evidence="5">
    <location>
        <begin position="608"/>
        <end position="623"/>
    </location>
</feature>
<feature type="compositionally biased region" description="Acidic residues" evidence="5">
    <location>
        <begin position="630"/>
        <end position="642"/>
    </location>
</feature>
<feature type="compositionally biased region" description="Basic and acidic residues" evidence="5">
    <location>
        <begin position="645"/>
        <end position="655"/>
    </location>
</feature>
<feature type="compositionally biased region" description="Basic and acidic residues" evidence="5">
    <location>
        <begin position="766"/>
        <end position="788"/>
    </location>
</feature>
<feature type="compositionally biased region" description="Basic and acidic residues" evidence="5">
    <location>
        <begin position="797"/>
        <end position="808"/>
    </location>
</feature>
<feature type="compositionally biased region" description="Acidic residues" evidence="5">
    <location>
        <begin position="810"/>
        <end position="826"/>
    </location>
</feature>
<feature type="compositionally biased region" description="Acidic residues" evidence="5">
    <location>
        <begin position="844"/>
        <end position="871"/>
    </location>
</feature>
<feature type="binding site" evidence="2">
    <location>
        <begin position="102"/>
        <end position="109"/>
    </location>
    <ligand>
        <name>ATP</name>
        <dbReference type="ChEBI" id="CHEBI:30616"/>
    </ligand>
</feature>
<dbReference type="EC" id="3.6.4.13"/>
<dbReference type="EMBL" id="CM003152">
    <property type="protein sequence ID" value="KIS67420.1"/>
    <property type="molecule type" value="Genomic_DNA"/>
</dbReference>
<dbReference type="RefSeq" id="XP_011391015.1">
    <property type="nucleotide sequence ID" value="XM_011392713.1"/>
</dbReference>
<dbReference type="SMR" id="Q4P5U4"/>
<dbReference type="FunCoup" id="Q4P5U4">
    <property type="interactions" value="769"/>
</dbReference>
<dbReference type="STRING" id="237631.Q4P5U4"/>
<dbReference type="EnsemblFungi" id="KIS67420">
    <property type="protein sequence ID" value="KIS67420"/>
    <property type="gene ID" value="UMAG_11989"/>
</dbReference>
<dbReference type="GeneID" id="23567787"/>
<dbReference type="KEGG" id="uma:UMAG_11989"/>
<dbReference type="VEuPathDB" id="FungiDB:UMAG_11989"/>
<dbReference type="eggNOG" id="KOG0343">
    <property type="taxonomic scope" value="Eukaryota"/>
</dbReference>
<dbReference type="HOGENOM" id="CLU_003041_26_1_1"/>
<dbReference type="InParanoid" id="Q4P5U4"/>
<dbReference type="OrthoDB" id="10259640at2759"/>
<dbReference type="Proteomes" id="UP000000561">
    <property type="component" value="Chromosome 13"/>
</dbReference>
<dbReference type="GO" id="GO:0005730">
    <property type="term" value="C:nucleolus"/>
    <property type="evidence" value="ECO:0007669"/>
    <property type="project" value="UniProtKB-SubCell"/>
</dbReference>
<dbReference type="GO" id="GO:0005634">
    <property type="term" value="C:nucleus"/>
    <property type="evidence" value="ECO:0000318"/>
    <property type="project" value="GO_Central"/>
</dbReference>
<dbReference type="GO" id="GO:0032040">
    <property type="term" value="C:small-subunit processome"/>
    <property type="evidence" value="ECO:0007669"/>
    <property type="project" value="EnsemblFungi"/>
</dbReference>
<dbReference type="GO" id="GO:0005524">
    <property type="term" value="F:ATP binding"/>
    <property type="evidence" value="ECO:0007669"/>
    <property type="project" value="UniProtKB-KW"/>
</dbReference>
<dbReference type="GO" id="GO:0016887">
    <property type="term" value="F:ATP hydrolysis activity"/>
    <property type="evidence" value="ECO:0007669"/>
    <property type="project" value="RHEA"/>
</dbReference>
<dbReference type="GO" id="GO:0042802">
    <property type="term" value="F:identical protein binding"/>
    <property type="evidence" value="ECO:0007669"/>
    <property type="project" value="EnsemblFungi"/>
</dbReference>
<dbReference type="GO" id="GO:0003723">
    <property type="term" value="F:RNA binding"/>
    <property type="evidence" value="ECO:0007669"/>
    <property type="project" value="UniProtKB-KW"/>
</dbReference>
<dbReference type="GO" id="GO:0003724">
    <property type="term" value="F:RNA helicase activity"/>
    <property type="evidence" value="ECO:0007669"/>
    <property type="project" value="UniProtKB-EC"/>
</dbReference>
<dbReference type="GO" id="GO:0006364">
    <property type="term" value="P:rRNA processing"/>
    <property type="evidence" value="ECO:0000318"/>
    <property type="project" value="GO_Central"/>
</dbReference>
<dbReference type="CDD" id="cd17941">
    <property type="entry name" value="DEADc_DDX10"/>
    <property type="match status" value="1"/>
</dbReference>
<dbReference type="CDD" id="cd18787">
    <property type="entry name" value="SF2_C_DEAD"/>
    <property type="match status" value="1"/>
</dbReference>
<dbReference type="Gene3D" id="3.40.50.300">
    <property type="entry name" value="P-loop containing nucleotide triphosphate hydrolases"/>
    <property type="match status" value="2"/>
</dbReference>
<dbReference type="InterPro" id="IPR011545">
    <property type="entry name" value="DEAD/DEAH_box_helicase_dom"/>
</dbReference>
<dbReference type="InterPro" id="IPR014001">
    <property type="entry name" value="Helicase_ATP-bd"/>
</dbReference>
<dbReference type="InterPro" id="IPR001650">
    <property type="entry name" value="Helicase_C-like"/>
</dbReference>
<dbReference type="InterPro" id="IPR027417">
    <property type="entry name" value="P-loop_NTPase"/>
</dbReference>
<dbReference type="InterPro" id="IPR000629">
    <property type="entry name" value="RNA-helicase_DEAD-box_CS"/>
</dbReference>
<dbReference type="InterPro" id="IPR014014">
    <property type="entry name" value="RNA_helicase_DEAD_Q_motif"/>
</dbReference>
<dbReference type="InterPro" id="IPR025313">
    <property type="entry name" value="SPB4-like_CTE"/>
</dbReference>
<dbReference type="PANTHER" id="PTHR24031">
    <property type="entry name" value="RNA HELICASE"/>
    <property type="match status" value="1"/>
</dbReference>
<dbReference type="Pfam" id="PF13959">
    <property type="entry name" value="CTE_SPB4"/>
    <property type="match status" value="1"/>
</dbReference>
<dbReference type="Pfam" id="PF00270">
    <property type="entry name" value="DEAD"/>
    <property type="match status" value="1"/>
</dbReference>
<dbReference type="Pfam" id="PF00271">
    <property type="entry name" value="Helicase_C"/>
    <property type="match status" value="1"/>
</dbReference>
<dbReference type="SMART" id="SM00487">
    <property type="entry name" value="DEXDc"/>
    <property type="match status" value="1"/>
</dbReference>
<dbReference type="SMART" id="SM01178">
    <property type="entry name" value="DUF4217"/>
    <property type="match status" value="1"/>
</dbReference>
<dbReference type="SMART" id="SM00490">
    <property type="entry name" value="HELICc"/>
    <property type="match status" value="1"/>
</dbReference>
<dbReference type="SUPFAM" id="SSF52540">
    <property type="entry name" value="P-loop containing nucleoside triphosphate hydrolases"/>
    <property type="match status" value="1"/>
</dbReference>
<dbReference type="PROSITE" id="PS00039">
    <property type="entry name" value="DEAD_ATP_HELICASE"/>
    <property type="match status" value="1"/>
</dbReference>
<dbReference type="PROSITE" id="PS51192">
    <property type="entry name" value="HELICASE_ATP_BIND_1"/>
    <property type="match status" value="1"/>
</dbReference>
<dbReference type="PROSITE" id="PS51194">
    <property type="entry name" value="HELICASE_CTER"/>
    <property type="match status" value="1"/>
</dbReference>
<dbReference type="PROSITE" id="PS51195">
    <property type="entry name" value="Q_MOTIF"/>
    <property type="match status" value="1"/>
</dbReference>
<proteinExistence type="inferred from homology"/>
<comment type="function">
    <text evidence="1">ATP-dependent RNA helicase required for ribosome biogenesis. Involved in the release of U14 snoRNA in pre-ribosomal complexes. Required for pre-rRNA cleavage at site A2 (By similarity).</text>
</comment>
<comment type="catalytic activity">
    <reaction>
        <text>ATP + H2O = ADP + phosphate + H(+)</text>
        <dbReference type="Rhea" id="RHEA:13065"/>
        <dbReference type="ChEBI" id="CHEBI:15377"/>
        <dbReference type="ChEBI" id="CHEBI:15378"/>
        <dbReference type="ChEBI" id="CHEBI:30616"/>
        <dbReference type="ChEBI" id="CHEBI:43474"/>
        <dbReference type="ChEBI" id="CHEBI:456216"/>
        <dbReference type="EC" id="3.6.4.13"/>
    </reaction>
</comment>
<comment type="subunit">
    <text evidence="1">Interacts with the U3 and U14 snoRNAs. Associates with pre-ribosomal complexes (By similarity).</text>
</comment>
<comment type="subcellular location">
    <subcellularLocation>
        <location evidence="1">Nucleus</location>
        <location evidence="1">Nucleolus</location>
    </subcellularLocation>
</comment>
<comment type="domain">
    <text>The Q motif is unique to and characteristic of the DEAD box family of RNA helicases and controls ATP binding and hydrolysis.</text>
</comment>
<comment type="similarity">
    <text evidence="6">Belongs to the DEAD box helicase family. DDX10/DBP4 subfamily.</text>
</comment>
<name>DBP4_MYCMD</name>
<keyword id="KW-0067">ATP-binding</keyword>
<keyword id="KW-0347">Helicase</keyword>
<keyword id="KW-0378">Hydrolase</keyword>
<keyword id="KW-0547">Nucleotide-binding</keyword>
<keyword id="KW-0539">Nucleus</keyword>
<keyword id="KW-1185">Reference proteome</keyword>
<keyword id="KW-0690">Ribosome biogenesis</keyword>
<keyword id="KW-0694">RNA-binding</keyword>
<keyword id="KW-0698">rRNA processing</keyword>